<reference key="1">
    <citation type="journal article" date="2008" name="J. Bacteriol.">
        <title>The pangenome structure of Escherichia coli: comparative genomic analysis of E. coli commensal and pathogenic isolates.</title>
        <authorList>
            <person name="Rasko D.A."/>
            <person name="Rosovitz M.J."/>
            <person name="Myers G.S.A."/>
            <person name="Mongodin E.F."/>
            <person name="Fricke W.F."/>
            <person name="Gajer P."/>
            <person name="Crabtree J."/>
            <person name="Sebaihia M."/>
            <person name="Thomson N.R."/>
            <person name="Chaudhuri R."/>
            <person name="Henderson I.R."/>
            <person name="Sperandio V."/>
            <person name="Ravel J."/>
        </authorList>
    </citation>
    <scope>NUCLEOTIDE SEQUENCE [LARGE SCALE GENOMIC DNA]</scope>
    <source>
        <strain>E24377A / ETEC</strain>
    </source>
</reference>
<sequence length="474" mass="53663">MTKKLHIKTWGCQMNEYDSSKMADLLDATHGYQLTDVAEEADVLLLNTCSIREKAQEKVFHQLGRWKLLKEKNPDLIIGVGGCVASQEGEHIRQRAHYVDIIFGPQTLHRLPEMINSVRGDRSPVVDISFPEIEKFDRLPEPRAEGPTAFVSIMEGCNKYCTYCVVPYTRGEEVSRPSDDILFEIAQLAAQGVREVNLLGQNVNAWRGENYDGTTGSFADLLRLVAAIDGIDRIRFTTSHPIEFTDDIIEVYRDTPELVSFLHLPVQSGSDRILNLMGRTHTALEYKAIIRKLRAARPDIQISSDFIVGFPGETTEDFEKTMKLIADVNFDMSYSFIFSARPGTPAADMVDDVPEEEKKQRLYILQERINQQAMAWSRRMLGTTQRILVEGTSRKSIMELSGRTENNRVVNFEGTPDMIGKFVDVEITDVYPNSLRGKVVRTEDEMGLRVAETPESVIARTRKENDLGVGYYQP</sequence>
<feature type="chain" id="PRO_0000374287" description="tRNA-2-methylthio-N(6)-dimethylallyladenosine synthase">
    <location>
        <begin position="1"/>
        <end position="474"/>
    </location>
</feature>
<feature type="domain" description="MTTase N-terminal" evidence="1">
    <location>
        <begin position="3"/>
        <end position="120"/>
    </location>
</feature>
<feature type="domain" description="Radical SAM core" evidence="2">
    <location>
        <begin position="143"/>
        <end position="375"/>
    </location>
</feature>
<feature type="domain" description="TRAM" evidence="1">
    <location>
        <begin position="378"/>
        <end position="441"/>
    </location>
</feature>
<feature type="binding site" evidence="1">
    <location>
        <position position="12"/>
    </location>
    <ligand>
        <name>[4Fe-4S] cluster</name>
        <dbReference type="ChEBI" id="CHEBI:49883"/>
        <label>1</label>
    </ligand>
</feature>
<feature type="binding site" evidence="1">
    <location>
        <position position="49"/>
    </location>
    <ligand>
        <name>[4Fe-4S] cluster</name>
        <dbReference type="ChEBI" id="CHEBI:49883"/>
        <label>1</label>
    </ligand>
</feature>
<feature type="binding site" evidence="1">
    <location>
        <position position="83"/>
    </location>
    <ligand>
        <name>[4Fe-4S] cluster</name>
        <dbReference type="ChEBI" id="CHEBI:49883"/>
        <label>1</label>
    </ligand>
</feature>
<feature type="binding site" evidence="1">
    <location>
        <position position="157"/>
    </location>
    <ligand>
        <name>[4Fe-4S] cluster</name>
        <dbReference type="ChEBI" id="CHEBI:49883"/>
        <label>2</label>
        <note>4Fe-4S-S-AdoMet</note>
    </ligand>
</feature>
<feature type="binding site" evidence="1">
    <location>
        <position position="161"/>
    </location>
    <ligand>
        <name>[4Fe-4S] cluster</name>
        <dbReference type="ChEBI" id="CHEBI:49883"/>
        <label>2</label>
        <note>4Fe-4S-S-AdoMet</note>
    </ligand>
</feature>
<feature type="binding site" evidence="1">
    <location>
        <position position="164"/>
    </location>
    <ligand>
        <name>[4Fe-4S] cluster</name>
        <dbReference type="ChEBI" id="CHEBI:49883"/>
        <label>2</label>
        <note>4Fe-4S-S-AdoMet</note>
    </ligand>
</feature>
<gene>
    <name evidence="1" type="primary">miaB</name>
    <name type="ordered locus">EcE24377A_0690</name>
</gene>
<organism>
    <name type="scientific">Escherichia coli O139:H28 (strain E24377A / ETEC)</name>
    <dbReference type="NCBI Taxonomy" id="331111"/>
    <lineage>
        <taxon>Bacteria</taxon>
        <taxon>Pseudomonadati</taxon>
        <taxon>Pseudomonadota</taxon>
        <taxon>Gammaproteobacteria</taxon>
        <taxon>Enterobacterales</taxon>
        <taxon>Enterobacteriaceae</taxon>
        <taxon>Escherichia</taxon>
    </lineage>
</organism>
<proteinExistence type="inferred from homology"/>
<evidence type="ECO:0000255" key="1">
    <source>
        <dbReference type="HAMAP-Rule" id="MF_01864"/>
    </source>
</evidence>
<evidence type="ECO:0000255" key="2">
    <source>
        <dbReference type="PROSITE-ProRule" id="PRU01266"/>
    </source>
</evidence>
<name>MIAB_ECO24</name>
<protein>
    <recommendedName>
        <fullName evidence="1">tRNA-2-methylthio-N(6)-dimethylallyladenosine synthase</fullName>
        <ecNumber evidence="1">2.8.4.3</ecNumber>
    </recommendedName>
    <alternativeName>
        <fullName evidence="1">(Dimethylallyl)adenosine tRNA methylthiotransferase MiaB</fullName>
    </alternativeName>
    <alternativeName>
        <fullName evidence="1">tRNA-i(6)A37 methylthiotransferase</fullName>
    </alternativeName>
</protein>
<comment type="function">
    <text evidence="1">Catalyzes the methylthiolation of N6-(dimethylallyl)adenosine (i(6)A), leading to the formation of 2-methylthio-N6-(dimethylallyl)adenosine (ms(2)i(6)A) at position 37 in tRNAs that read codons beginning with uridine.</text>
</comment>
<comment type="catalytic activity">
    <reaction evidence="1">
        <text>N(6)-dimethylallyladenosine(37) in tRNA + (sulfur carrier)-SH + AH2 + 2 S-adenosyl-L-methionine = 2-methylsulfanyl-N(6)-dimethylallyladenosine(37) in tRNA + (sulfur carrier)-H + 5'-deoxyadenosine + L-methionine + A + S-adenosyl-L-homocysteine + 2 H(+)</text>
        <dbReference type="Rhea" id="RHEA:37067"/>
        <dbReference type="Rhea" id="RHEA-COMP:10375"/>
        <dbReference type="Rhea" id="RHEA-COMP:10376"/>
        <dbReference type="Rhea" id="RHEA-COMP:14737"/>
        <dbReference type="Rhea" id="RHEA-COMP:14739"/>
        <dbReference type="ChEBI" id="CHEBI:13193"/>
        <dbReference type="ChEBI" id="CHEBI:15378"/>
        <dbReference type="ChEBI" id="CHEBI:17319"/>
        <dbReference type="ChEBI" id="CHEBI:17499"/>
        <dbReference type="ChEBI" id="CHEBI:29917"/>
        <dbReference type="ChEBI" id="CHEBI:57844"/>
        <dbReference type="ChEBI" id="CHEBI:57856"/>
        <dbReference type="ChEBI" id="CHEBI:59789"/>
        <dbReference type="ChEBI" id="CHEBI:64428"/>
        <dbReference type="ChEBI" id="CHEBI:74415"/>
        <dbReference type="ChEBI" id="CHEBI:74417"/>
        <dbReference type="EC" id="2.8.4.3"/>
    </reaction>
</comment>
<comment type="cofactor">
    <cofactor evidence="1">
        <name>[4Fe-4S] cluster</name>
        <dbReference type="ChEBI" id="CHEBI:49883"/>
    </cofactor>
    <text evidence="1">Binds 2 [4Fe-4S] clusters. One cluster is coordinated with 3 cysteines and an exchangeable S-adenosyl-L-methionine.</text>
</comment>
<comment type="subunit">
    <text evidence="1">Monomer.</text>
</comment>
<comment type="subcellular location">
    <subcellularLocation>
        <location evidence="1">Cytoplasm</location>
    </subcellularLocation>
</comment>
<comment type="similarity">
    <text evidence="1">Belongs to the methylthiotransferase family. MiaB subfamily.</text>
</comment>
<keyword id="KW-0004">4Fe-4S</keyword>
<keyword id="KW-0963">Cytoplasm</keyword>
<keyword id="KW-0408">Iron</keyword>
<keyword id="KW-0411">Iron-sulfur</keyword>
<keyword id="KW-0479">Metal-binding</keyword>
<keyword id="KW-1185">Reference proteome</keyword>
<keyword id="KW-0949">S-adenosyl-L-methionine</keyword>
<keyword id="KW-0808">Transferase</keyword>
<keyword id="KW-0819">tRNA processing</keyword>
<accession>A7ZJ54</accession>
<dbReference type="EC" id="2.8.4.3" evidence="1"/>
<dbReference type="EMBL" id="CP000800">
    <property type="protein sequence ID" value="ABV19411.1"/>
    <property type="molecule type" value="Genomic_DNA"/>
</dbReference>
<dbReference type="RefSeq" id="WP_000162740.1">
    <property type="nucleotide sequence ID" value="NC_009801.1"/>
</dbReference>
<dbReference type="SMR" id="A7ZJ54"/>
<dbReference type="GeneID" id="86863171"/>
<dbReference type="KEGG" id="ecw:EcE24377A_0690"/>
<dbReference type="HOGENOM" id="CLU_018697_2_0_6"/>
<dbReference type="Proteomes" id="UP000001122">
    <property type="component" value="Chromosome"/>
</dbReference>
<dbReference type="GO" id="GO:0005829">
    <property type="term" value="C:cytosol"/>
    <property type="evidence" value="ECO:0007669"/>
    <property type="project" value="TreeGrafter"/>
</dbReference>
<dbReference type="GO" id="GO:0051539">
    <property type="term" value="F:4 iron, 4 sulfur cluster binding"/>
    <property type="evidence" value="ECO:0007669"/>
    <property type="project" value="UniProtKB-UniRule"/>
</dbReference>
<dbReference type="GO" id="GO:0046872">
    <property type="term" value="F:metal ion binding"/>
    <property type="evidence" value="ECO:0007669"/>
    <property type="project" value="UniProtKB-KW"/>
</dbReference>
<dbReference type="GO" id="GO:0035597">
    <property type="term" value="F:N6-isopentenyladenosine methylthiotransferase activity"/>
    <property type="evidence" value="ECO:0007669"/>
    <property type="project" value="TreeGrafter"/>
</dbReference>
<dbReference type="CDD" id="cd01335">
    <property type="entry name" value="Radical_SAM"/>
    <property type="match status" value="1"/>
</dbReference>
<dbReference type="FunFam" id="3.40.50.12160:FF:000001">
    <property type="entry name" value="tRNA-2-methylthio-N(6)-dimethylallyladenosine synthase"/>
    <property type="match status" value="1"/>
</dbReference>
<dbReference type="FunFam" id="3.80.30.20:FF:000001">
    <property type="entry name" value="tRNA-2-methylthio-N(6)-dimethylallyladenosine synthase 2"/>
    <property type="match status" value="1"/>
</dbReference>
<dbReference type="Gene3D" id="3.40.50.12160">
    <property type="entry name" value="Methylthiotransferase, N-terminal domain"/>
    <property type="match status" value="1"/>
</dbReference>
<dbReference type="Gene3D" id="3.80.30.20">
    <property type="entry name" value="tm_1862 like domain"/>
    <property type="match status" value="1"/>
</dbReference>
<dbReference type="HAMAP" id="MF_01864">
    <property type="entry name" value="tRNA_metthiotr_MiaB"/>
    <property type="match status" value="1"/>
</dbReference>
<dbReference type="InterPro" id="IPR006638">
    <property type="entry name" value="Elp3/MiaA/NifB-like_rSAM"/>
</dbReference>
<dbReference type="InterPro" id="IPR005839">
    <property type="entry name" value="Methylthiotransferase"/>
</dbReference>
<dbReference type="InterPro" id="IPR020612">
    <property type="entry name" value="Methylthiotransferase_CS"/>
</dbReference>
<dbReference type="InterPro" id="IPR013848">
    <property type="entry name" value="Methylthiotransferase_N"/>
</dbReference>
<dbReference type="InterPro" id="IPR038135">
    <property type="entry name" value="Methylthiotransferase_N_sf"/>
</dbReference>
<dbReference type="InterPro" id="IPR006463">
    <property type="entry name" value="MiaB_methiolase"/>
</dbReference>
<dbReference type="InterPro" id="IPR007197">
    <property type="entry name" value="rSAM"/>
</dbReference>
<dbReference type="InterPro" id="IPR023404">
    <property type="entry name" value="rSAM_horseshoe"/>
</dbReference>
<dbReference type="InterPro" id="IPR002792">
    <property type="entry name" value="TRAM_dom"/>
</dbReference>
<dbReference type="NCBIfam" id="TIGR01574">
    <property type="entry name" value="miaB-methiolase"/>
    <property type="match status" value="1"/>
</dbReference>
<dbReference type="NCBIfam" id="TIGR00089">
    <property type="entry name" value="MiaB/RimO family radical SAM methylthiotransferase"/>
    <property type="match status" value="1"/>
</dbReference>
<dbReference type="PANTHER" id="PTHR43020">
    <property type="entry name" value="CDK5 REGULATORY SUBUNIT-ASSOCIATED PROTEIN 1"/>
    <property type="match status" value="1"/>
</dbReference>
<dbReference type="PANTHER" id="PTHR43020:SF2">
    <property type="entry name" value="MITOCHONDRIAL TRNA METHYLTHIOTRANSFERASE CDK5RAP1"/>
    <property type="match status" value="1"/>
</dbReference>
<dbReference type="Pfam" id="PF04055">
    <property type="entry name" value="Radical_SAM"/>
    <property type="match status" value="1"/>
</dbReference>
<dbReference type="Pfam" id="PF01938">
    <property type="entry name" value="TRAM"/>
    <property type="match status" value="1"/>
</dbReference>
<dbReference type="Pfam" id="PF00919">
    <property type="entry name" value="UPF0004"/>
    <property type="match status" value="1"/>
</dbReference>
<dbReference type="SFLD" id="SFLDF00273">
    <property type="entry name" value="(dimethylallyl)adenosine_tRNA"/>
    <property type="match status" value="1"/>
</dbReference>
<dbReference type="SFLD" id="SFLDG01082">
    <property type="entry name" value="B12-binding_domain_containing"/>
    <property type="match status" value="1"/>
</dbReference>
<dbReference type="SFLD" id="SFLDS00029">
    <property type="entry name" value="Radical_SAM"/>
    <property type="match status" value="1"/>
</dbReference>
<dbReference type="SMART" id="SM00729">
    <property type="entry name" value="Elp3"/>
    <property type="match status" value="1"/>
</dbReference>
<dbReference type="SUPFAM" id="SSF102114">
    <property type="entry name" value="Radical SAM enzymes"/>
    <property type="match status" value="1"/>
</dbReference>
<dbReference type="PROSITE" id="PS51449">
    <property type="entry name" value="MTTASE_N"/>
    <property type="match status" value="1"/>
</dbReference>
<dbReference type="PROSITE" id="PS01278">
    <property type="entry name" value="MTTASE_RADICAL"/>
    <property type="match status" value="1"/>
</dbReference>
<dbReference type="PROSITE" id="PS51918">
    <property type="entry name" value="RADICAL_SAM"/>
    <property type="match status" value="1"/>
</dbReference>
<dbReference type="PROSITE" id="PS50926">
    <property type="entry name" value="TRAM"/>
    <property type="match status" value="1"/>
</dbReference>